<evidence type="ECO:0000255" key="1">
    <source>
        <dbReference type="HAMAP-Rule" id="MF_00501"/>
    </source>
</evidence>
<evidence type="ECO:0000305" key="2"/>
<sequence length="73" mass="8078">MKADIHPAYHTIKVVMTDGTEYETRSTWGSEGAVMNLEIDPKSHPAWTGGNQQLMDRGGRVSKFNKRFGGLGL</sequence>
<reference key="1">
    <citation type="journal article" date="2001" name="Science">
        <title>The genome of the natural genetic engineer Agrobacterium tumefaciens C58.</title>
        <authorList>
            <person name="Wood D.W."/>
            <person name="Setubal J.C."/>
            <person name="Kaul R."/>
            <person name="Monks D.E."/>
            <person name="Kitajima J.P."/>
            <person name="Okura V.K."/>
            <person name="Zhou Y."/>
            <person name="Chen L."/>
            <person name="Wood G.E."/>
            <person name="Almeida N.F. Jr."/>
            <person name="Woo L."/>
            <person name="Chen Y."/>
            <person name="Paulsen I.T."/>
            <person name="Eisen J.A."/>
            <person name="Karp P.D."/>
            <person name="Bovee D. Sr."/>
            <person name="Chapman P."/>
            <person name="Clendenning J."/>
            <person name="Deatherage G."/>
            <person name="Gillet W."/>
            <person name="Grant C."/>
            <person name="Kutyavin T."/>
            <person name="Levy R."/>
            <person name="Li M.-J."/>
            <person name="McClelland E."/>
            <person name="Palmieri A."/>
            <person name="Raymond C."/>
            <person name="Rouse G."/>
            <person name="Saenphimmachak C."/>
            <person name="Wu Z."/>
            <person name="Romero P."/>
            <person name="Gordon D."/>
            <person name="Zhang S."/>
            <person name="Yoo H."/>
            <person name="Tao Y."/>
            <person name="Biddle P."/>
            <person name="Jung M."/>
            <person name="Krespan W."/>
            <person name="Perry M."/>
            <person name="Gordon-Kamm B."/>
            <person name="Liao L."/>
            <person name="Kim S."/>
            <person name="Hendrick C."/>
            <person name="Zhao Z.-Y."/>
            <person name="Dolan M."/>
            <person name="Chumley F."/>
            <person name="Tingey S.V."/>
            <person name="Tomb J.-F."/>
            <person name="Gordon M.P."/>
            <person name="Olson M.V."/>
            <person name="Nester E.W."/>
        </authorList>
    </citation>
    <scope>NUCLEOTIDE SEQUENCE [LARGE SCALE GENOMIC DNA]</scope>
    <source>
        <strain>C58 / ATCC 33970</strain>
    </source>
</reference>
<reference key="2">
    <citation type="journal article" date="2001" name="Science">
        <title>Genome sequence of the plant pathogen and biotechnology agent Agrobacterium tumefaciens C58.</title>
        <authorList>
            <person name="Goodner B."/>
            <person name="Hinkle G."/>
            <person name="Gattung S."/>
            <person name="Miller N."/>
            <person name="Blanchard M."/>
            <person name="Qurollo B."/>
            <person name="Goldman B.S."/>
            <person name="Cao Y."/>
            <person name="Askenazi M."/>
            <person name="Halling C."/>
            <person name="Mullin L."/>
            <person name="Houmiel K."/>
            <person name="Gordon J."/>
            <person name="Vaudin M."/>
            <person name="Iartchouk O."/>
            <person name="Epp A."/>
            <person name="Liu F."/>
            <person name="Wollam C."/>
            <person name="Allinger M."/>
            <person name="Doughty D."/>
            <person name="Scott C."/>
            <person name="Lappas C."/>
            <person name="Markelz B."/>
            <person name="Flanagan C."/>
            <person name="Crowell C."/>
            <person name="Gurson J."/>
            <person name="Lomo C."/>
            <person name="Sear C."/>
            <person name="Strub G."/>
            <person name="Cielo C."/>
            <person name="Slater S."/>
        </authorList>
    </citation>
    <scope>NUCLEOTIDE SEQUENCE [LARGE SCALE GENOMIC DNA]</scope>
    <source>
        <strain>C58 / ATCC 33970</strain>
    </source>
</reference>
<feature type="chain" id="PRO_0000173073" description="Large ribosomal subunit protein bL31">
    <location>
        <begin position="1"/>
        <end position="73"/>
    </location>
</feature>
<organism>
    <name type="scientific">Agrobacterium fabrum (strain C58 / ATCC 33970)</name>
    <name type="common">Agrobacterium tumefaciens (strain C58)</name>
    <dbReference type="NCBI Taxonomy" id="176299"/>
    <lineage>
        <taxon>Bacteria</taxon>
        <taxon>Pseudomonadati</taxon>
        <taxon>Pseudomonadota</taxon>
        <taxon>Alphaproteobacteria</taxon>
        <taxon>Hyphomicrobiales</taxon>
        <taxon>Rhizobiaceae</taxon>
        <taxon>Rhizobium/Agrobacterium group</taxon>
        <taxon>Agrobacterium</taxon>
        <taxon>Agrobacterium tumefaciens complex</taxon>
    </lineage>
</organism>
<comment type="function">
    <text evidence="1">Binds the 23S rRNA.</text>
</comment>
<comment type="subunit">
    <text evidence="1">Part of the 50S ribosomal subunit.</text>
</comment>
<comment type="similarity">
    <text evidence="1">Belongs to the bacterial ribosomal protein bL31 family. Type A subfamily.</text>
</comment>
<keyword id="KW-1185">Reference proteome</keyword>
<keyword id="KW-0687">Ribonucleoprotein</keyword>
<keyword id="KW-0689">Ribosomal protein</keyword>
<keyword id="KW-0694">RNA-binding</keyword>
<keyword id="KW-0699">rRNA-binding</keyword>
<accession>Q8U9I5</accession>
<gene>
    <name evidence="1" type="primary">rpmE</name>
    <name type="ordered locus">Atu3743</name>
    <name type="ORF">AGR_L_2181</name>
</gene>
<name>RL31_AGRFC</name>
<protein>
    <recommendedName>
        <fullName evidence="1">Large ribosomal subunit protein bL31</fullName>
    </recommendedName>
    <alternativeName>
        <fullName evidence="2">50S ribosomal protein L31</fullName>
    </alternativeName>
</protein>
<dbReference type="EMBL" id="AE007870">
    <property type="protein sequence ID" value="AAK89663.1"/>
    <property type="molecule type" value="Genomic_DNA"/>
</dbReference>
<dbReference type="PIR" id="AC3017">
    <property type="entry name" value="AC3017"/>
</dbReference>
<dbReference type="PIR" id="E98267">
    <property type="entry name" value="E98267"/>
</dbReference>
<dbReference type="RefSeq" id="NP_356878.1">
    <property type="nucleotide sequence ID" value="NC_003063.2"/>
</dbReference>
<dbReference type="RefSeq" id="WP_003506183.1">
    <property type="nucleotide sequence ID" value="NC_003063.2"/>
</dbReference>
<dbReference type="SMR" id="Q8U9I5"/>
<dbReference type="STRING" id="176299.Atu3743"/>
<dbReference type="EnsemblBacteria" id="AAK89663">
    <property type="protein sequence ID" value="AAK89663"/>
    <property type="gene ID" value="Atu3743"/>
</dbReference>
<dbReference type="GeneID" id="97366663"/>
<dbReference type="KEGG" id="atu:Atu3743"/>
<dbReference type="PATRIC" id="fig|176299.10.peg.3577"/>
<dbReference type="eggNOG" id="COG0254">
    <property type="taxonomic scope" value="Bacteria"/>
</dbReference>
<dbReference type="HOGENOM" id="CLU_114306_3_2_5"/>
<dbReference type="OrthoDB" id="9803251at2"/>
<dbReference type="PhylomeDB" id="Q8U9I5"/>
<dbReference type="BioCyc" id="AGRO:ATU3743-MONOMER"/>
<dbReference type="Proteomes" id="UP000000813">
    <property type="component" value="Chromosome linear"/>
</dbReference>
<dbReference type="GO" id="GO:1990904">
    <property type="term" value="C:ribonucleoprotein complex"/>
    <property type="evidence" value="ECO:0007669"/>
    <property type="project" value="UniProtKB-KW"/>
</dbReference>
<dbReference type="GO" id="GO:0005840">
    <property type="term" value="C:ribosome"/>
    <property type="evidence" value="ECO:0007669"/>
    <property type="project" value="UniProtKB-KW"/>
</dbReference>
<dbReference type="GO" id="GO:0019843">
    <property type="term" value="F:rRNA binding"/>
    <property type="evidence" value="ECO:0007669"/>
    <property type="project" value="UniProtKB-KW"/>
</dbReference>
<dbReference type="GO" id="GO:0003735">
    <property type="term" value="F:structural constituent of ribosome"/>
    <property type="evidence" value="ECO:0007669"/>
    <property type="project" value="InterPro"/>
</dbReference>
<dbReference type="GO" id="GO:0006412">
    <property type="term" value="P:translation"/>
    <property type="evidence" value="ECO:0007669"/>
    <property type="project" value="UniProtKB-UniRule"/>
</dbReference>
<dbReference type="Gene3D" id="4.10.830.30">
    <property type="entry name" value="Ribosomal protein L31"/>
    <property type="match status" value="1"/>
</dbReference>
<dbReference type="HAMAP" id="MF_00501">
    <property type="entry name" value="Ribosomal_bL31_1"/>
    <property type="match status" value="1"/>
</dbReference>
<dbReference type="InterPro" id="IPR034704">
    <property type="entry name" value="Ribosomal_bL28/bL31-like_sf"/>
</dbReference>
<dbReference type="InterPro" id="IPR002150">
    <property type="entry name" value="Ribosomal_bL31"/>
</dbReference>
<dbReference type="InterPro" id="IPR027491">
    <property type="entry name" value="Ribosomal_bL31_A"/>
</dbReference>
<dbReference type="InterPro" id="IPR042105">
    <property type="entry name" value="Ribosomal_bL31_sf"/>
</dbReference>
<dbReference type="NCBIfam" id="TIGR00105">
    <property type="entry name" value="L31"/>
    <property type="match status" value="1"/>
</dbReference>
<dbReference type="NCBIfam" id="NF001809">
    <property type="entry name" value="PRK00528.1"/>
    <property type="match status" value="1"/>
</dbReference>
<dbReference type="PANTHER" id="PTHR33280">
    <property type="entry name" value="50S RIBOSOMAL PROTEIN L31, CHLOROPLASTIC"/>
    <property type="match status" value="1"/>
</dbReference>
<dbReference type="PANTHER" id="PTHR33280:SF6">
    <property type="entry name" value="LARGE RIBOSOMAL SUBUNIT PROTEIN BL31A"/>
    <property type="match status" value="1"/>
</dbReference>
<dbReference type="Pfam" id="PF01197">
    <property type="entry name" value="Ribosomal_L31"/>
    <property type="match status" value="1"/>
</dbReference>
<dbReference type="PRINTS" id="PR01249">
    <property type="entry name" value="RIBOSOMALL31"/>
</dbReference>
<dbReference type="SUPFAM" id="SSF143800">
    <property type="entry name" value="L28p-like"/>
    <property type="match status" value="1"/>
</dbReference>
<dbReference type="PROSITE" id="PS01143">
    <property type="entry name" value="RIBOSOMAL_L31"/>
    <property type="match status" value="1"/>
</dbReference>
<proteinExistence type="inferred from homology"/>